<sequence>MYVRHLGLRDFRSWAHADLELQPGRTVFIGSNGFGKTNLLEALWYSSTLGSHRVGTDAPLIRAGADRTVVSTIVVNDGRECAVDLEIAAGRANKARLNRSPVRSTREVLGVLRAVLFAPEDLALVRGDPSERRRYLDDLATLRRPAIAAVRADYDKVLRQRTALLKSLSGARHRGDRGALDTLDVWDSRLAEYGAQLMAARIDLVNQLAPEVEKAYQLLAPGSRAASIGYRSSLGAAAAAEVNAGDRDYLEAALLAGLAARRYAELERGVCLVGPHRDDLELWLGEQVAKGFASHGESWSLALSLRLAAYELLRADESDPVLLLDDVFAELDAARRRALAAVAESAEQVLVTAAVLEDIPAGWQARRLFVELRDTDAGRVSELRP</sequence>
<feature type="chain" id="PRO_1000048542" description="DNA replication and repair protein RecF">
    <location>
        <begin position="1"/>
        <end position="385"/>
    </location>
</feature>
<feature type="binding site" evidence="1">
    <location>
        <begin position="30"/>
        <end position="37"/>
    </location>
    <ligand>
        <name>ATP</name>
        <dbReference type="ChEBI" id="CHEBI:30616"/>
    </ligand>
</feature>
<proteinExistence type="inferred from homology"/>
<reference key="1">
    <citation type="submission" date="2006-10" db="EMBL/GenBank/DDBJ databases">
        <authorList>
            <person name="Fleischmann R.D."/>
            <person name="Dodson R.J."/>
            <person name="Haft D.H."/>
            <person name="Merkel J.S."/>
            <person name="Nelson W.C."/>
            <person name="Fraser C.M."/>
        </authorList>
    </citation>
    <scope>NUCLEOTIDE SEQUENCE [LARGE SCALE GENOMIC DNA]</scope>
    <source>
        <strain>104</strain>
    </source>
</reference>
<gene>
    <name evidence="1" type="primary">recF</name>
    <name type="ordered locus">MAV_0003</name>
</gene>
<keyword id="KW-0067">ATP-binding</keyword>
<keyword id="KW-0963">Cytoplasm</keyword>
<keyword id="KW-0227">DNA damage</keyword>
<keyword id="KW-0234">DNA repair</keyword>
<keyword id="KW-0235">DNA replication</keyword>
<keyword id="KW-0238">DNA-binding</keyword>
<keyword id="KW-0547">Nucleotide-binding</keyword>
<keyword id="KW-0742">SOS response</keyword>
<organism>
    <name type="scientific">Mycobacterium avium (strain 104)</name>
    <dbReference type="NCBI Taxonomy" id="243243"/>
    <lineage>
        <taxon>Bacteria</taxon>
        <taxon>Bacillati</taxon>
        <taxon>Actinomycetota</taxon>
        <taxon>Actinomycetes</taxon>
        <taxon>Mycobacteriales</taxon>
        <taxon>Mycobacteriaceae</taxon>
        <taxon>Mycobacterium</taxon>
        <taxon>Mycobacterium avium complex (MAC)</taxon>
    </lineage>
</organism>
<accession>A0Q8R8</accession>
<dbReference type="EMBL" id="CP000479">
    <property type="protein sequence ID" value="ABK67353.1"/>
    <property type="molecule type" value="Genomic_DNA"/>
</dbReference>
<dbReference type="RefSeq" id="WP_011723277.1">
    <property type="nucleotide sequence ID" value="NC_008595.1"/>
</dbReference>
<dbReference type="SMR" id="A0Q8R8"/>
<dbReference type="KEGG" id="mav:MAV_0003"/>
<dbReference type="HOGENOM" id="CLU_040267_1_1_11"/>
<dbReference type="Proteomes" id="UP000001574">
    <property type="component" value="Chromosome"/>
</dbReference>
<dbReference type="GO" id="GO:0005737">
    <property type="term" value="C:cytoplasm"/>
    <property type="evidence" value="ECO:0007669"/>
    <property type="project" value="UniProtKB-SubCell"/>
</dbReference>
<dbReference type="GO" id="GO:0005524">
    <property type="term" value="F:ATP binding"/>
    <property type="evidence" value="ECO:0007669"/>
    <property type="project" value="UniProtKB-UniRule"/>
</dbReference>
<dbReference type="GO" id="GO:0003697">
    <property type="term" value="F:single-stranded DNA binding"/>
    <property type="evidence" value="ECO:0007669"/>
    <property type="project" value="UniProtKB-UniRule"/>
</dbReference>
<dbReference type="GO" id="GO:0006260">
    <property type="term" value="P:DNA replication"/>
    <property type="evidence" value="ECO:0007669"/>
    <property type="project" value="UniProtKB-UniRule"/>
</dbReference>
<dbReference type="GO" id="GO:0000731">
    <property type="term" value="P:DNA synthesis involved in DNA repair"/>
    <property type="evidence" value="ECO:0007669"/>
    <property type="project" value="TreeGrafter"/>
</dbReference>
<dbReference type="GO" id="GO:0006302">
    <property type="term" value="P:double-strand break repair"/>
    <property type="evidence" value="ECO:0007669"/>
    <property type="project" value="TreeGrafter"/>
</dbReference>
<dbReference type="GO" id="GO:0009432">
    <property type="term" value="P:SOS response"/>
    <property type="evidence" value="ECO:0007669"/>
    <property type="project" value="UniProtKB-UniRule"/>
</dbReference>
<dbReference type="CDD" id="cd03242">
    <property type="entry name" value="ABC_RecF"/>
    <property type="match status" value="1"/>
</dbReference>
<dbReference type="Gene3D" id="3.40.50.300">
    <property type="entry name" value="P-loop containing nucleotide triphosphate hydrolases"/>
    <property type="match status" value="1"/>
</dbReference>
<dbReference type="Gene3D" id="1.20.1050.90">
    <property type="entry name" value="RecF/RecN/SMC, N-terminal domain"/>
    <property type="match status" value="1"/>
</dbReference>
<dbReference type="HAMAP" id="MF_00365">
    <property type="entry name" value="RecF"/>
    <property type="match status" value="1"/>
</dbReference>
<dbReference type="InterPro" id="IPR001238">
    <property type="entry name" value="DNA-binding_RecF"/>
</dbReference>
<dbReference type="InterPro" id="IPR018078">
    <property type="entry name" value="DNA-binding_RecF_CS"/>
</dbReference>
<dbReference type="InterPro" id="IPR027417">
    <property type="entry name" value="P-loop_NTPase"/>
</dbReference>
<dbReference type="InterPro" id="IPR003395">
    <property type="entry name" value="RecF/RecN/SMC_N"/>
</dbReference>
<dbReference type="InterPro" id="IPR042174">
    <property type="entry name" value="RecF_2"/>
</dbReference>
<dbReference type="NCBIfam" id="TIGR00611">
    <property type="entry name" value="recf"/>
    <property type="match status" value="1"/>
</dbReference>
<dbReference type="PANTHER" id="PTHR32182">
    <property type="entry name" value="DNA REPLICATION AND REPAIR PROTEIN RECF"/>
    <property type="match status" value="1"/>
</dbReference>
<dbReference type="PANTHER" id="PTHR32182:SF0">
    <property type="entry name" value="DNA REPLICATION AND REPAIR PROTEIN RECF"/>
    <property type="match status" value="1"/>
</dbReference>
<dbReference type="Pfam" id="PF02463">
    <property type="entry name" value="SMC_N"/>
    <property type="match status" value="1"/>
</dbReference>
<dbReference type="SUPFAM" id="SSF52540">
    <property type="entry name" value="P-loop containing nucleoside triphosphate hydrolases"/>
    <property type="match status" value="1"/>
</dbReference>
<dbReference type="PROSITE" id="PS00617">
    <property type="entry name" value="RECF_1"/>
    <property type="match status" value="1"/>
</dbReference>
<dbReference type="PROSITE" id="PS00618">
    <property type="entry name" value="RECF_2"/>
    <property type="match status" value="1"/>
</dbReference>
<protein>
    <recommendedName>
        <fullName evidence="1">DNA replication and repair protein RecF</fullName>
    </recommendedName>
</protein>
<evidence type="ECO:0000255" key="1">
    <source>
        <dbReference type="HAMAP-Rule" id="MF_00365"/>
    </source>
</evidence>
<name>RECF_MYCA1</name>
<comment type="function">
    <text evidence="1">The RecF protein is involved in DNA metabolism; it is required for DNA replication and normal SOS inducibility. RecF binds preferentially to single-stranded, linear DNA. It also seems to bind ATP.</text>
</comment>
<comment type="subcellular location">
    <subcellularLocation>
        <location evidence="1">Cytoplasm</location>
    </subcellularLocation>
</comment>
<comment type="similarity">
    <text evidence="1">Belongs to the RecF family.</text>
</comment>